<proteinExistence type="evidence at protein level"/>
<dbReference type="EMBL" id="L42023">
    <property type="protein sequence ID" value="AAC22996.1"/>
    <property type="molecule type" value="Genomic_DNA"/>
</dbReference>
<dbReference type="PIR" id="C64171">
    <property type="entry name" value="C64171"/>
</dbReference>
<dbReference type="RefSeq" id="NP_439500.1">
    <property type="nucleotide sequence ID" value="NC_000907.1"/>
</dbReference>
<dbReference type="SMR" id="P45173"/>
<dbReference type="STRING" id="71421.HI_1349"/>
<dbReference type="EnsemblBacteria" id="AAC22996">
    <property type="protein sequence ID" value="AAC22996"/>
    <property type="gene ID" value="HI_1349"/>
</dbReference>
<dbReference type="KEGG" id="hin:HI_1349"/>
<dbReference type="PATRIC" id="fig|71421.8.peg.1402"/>
<dbReference type="eggNOG" id="COG0783">
    <property type="taxonomic scope" value="Bacteria"/>
</dbReference>
<dbReference type="HOGENOM" id="CLU_098183_2_2_6"/>
<dbReference type="OrthoDB" id="9797687at2"/>
<dbReference type="PhylomeDB" id="P45173"/>
<dbReference type="BioCyc" id="HINF71421:G1GJ1-1374-MONOMER"/>
<dbReference type="Proteomes" id="UP000000579">
    <property type="component" value="Chromosome"/>
</dbReference>
<dbReference type="GO" id="GO:0008199">
    <property type="term" value="F:ferric iron binding"/>
    <property type="evidence" value="ECO:0007669"/>
    <property type="project" value="InterPro"/>
</dbReference>
<dbReference type="GO" id="GO:0016722">
    <property type="term" value="F:oxidoreductase activity, acting on metal ions"/>
    <property type="evidence" value="ECO:0007669"/>
    <property type="project" value="InterPro"/>
</dbReference>
<dbReference type="CDD" id="cd01043">
    <property type="entry name" value="DPS"/>
    <property type="match status" value="1"/>
</dbReference>
<dbReference type="Gene3D" id="1.20.1260.10">
    <property type="match status" value="1"/>
</dbReference>
<dbReference type="InterPro" id="IPR002177">
    <property type="entry name" value="DPS_DNA-bd"/>
</dbReference>
<dbReference type="InterPro" id="IPR023188">
    <property type="entry name" value="DPS_DNA-bd_CS"/>
</dbReference>
<dbReference type="InterPro" id="IPR012347">
    <property type="entry name" value="Ferritin-like"/>
</dbReference>
<dbReference type="InterPro" id="IPR009078">
    <property type="entry name" value="Ferritin-like_SF"/>
</dbReference>
<dbReference type="InterPro" id="IPR008331">
    <property type="entry name" value="Ferritin_DPS_dom"/>
</dbReference>
<dbReference type="PANTHER" id="PTHR42932">
    <property type="entry name" value="GENERAL STRESS PROTEIN 20U"/>
    <property type="match status" value="1"/>
</dbReference>
<dbReference type="PANTHER" id="PTHR42932:SF1">
    <property type="entry name" value="GENERAL STRESS PROTEIN 20U"/>
    <property type="match status" value="1"/>
</dbReference>
<dbReference type="Pfam" id="PF00210">
    <property type="entry name" value="Ferritin"/>
    <property type="match status" value="1"/>
</dbReference>
<dbReference type="PIRSF" id="PIRSF005900">
    <property type="entry name" value="Dps"/>
    <property type="match status" value="1"/>
</dbReference>
<dbReference type="PRINTS" id="PR01346">
    <property type="entry name" value="HELNAPAPROT"/>
</dbReference>
<dbReference type="SUPFAM" id="SSF47240">
    <property type="entry name" value="Ferritin-like"/>
    <property type="match status" value="1"/>
</dbReference>
<dbReference type="PROSITE" id="PS00818">
    <property type="entry name" value="DPS_1"/>
    <property type="match status" value="1"/>
</dbReference>
<dbReference type="PROSITE" id="PS00819">
    <property type="entry name" value="DPS_2"/>
    <property type="match status" value="1"/>
</dbReference>
<name>Y1349_HAEIN</name>
<reference key="1">
    <citation type="journal article" date="1995" name="Science">
        <title>Whole-genome random sequencing and assembly of Haemophilus influenzae Rd.</title>
        <authorList>
            <person name="Fleischmann R.D."/>
            <person name="Adams M.D."/>
            <person name="White O."/>
            <person name="Clayton R.A."/>
            <person name="Kirkness E.F."/>
            <person name="Kerlavage A.R."/>
            <person name="Bult C.J."/>
            <person name="Tomb J.-F."/>
            <person name="Dougherty B.A."/>
            <person name="Merrick J.M."/>
            <person name="McKenney K."/>
            <person name="Sutton G.G."/>
            <person name="FitzHugh W."/>
            <person name="Fields C.A."/>
            <person name="Gocayne J.D."/>
            <person name="Scott J.D."/>
            <person name="Shirley R."/>
            <person name="Liu L.-I."/>
            <person name="Glodek A."/>
            <person name="Kelley J.M."/>
            <person name="Weidman J.F."/>
            <person name="Phillips C.A."/>
            <person name="Spriggs T."/>
            <person name="Hedblom E."/>
            <person name="Cotton M.D."/>
            <person name="Utterback T.R."/>
            <person name="Hanna M.C."/>
            <person name="Nguyen D.T."/>
            <person name="Saudek D.M."/>
            <person name="Brandon R.C."/>
            <person name="Fine L.D."/>
            <person name="Fritchman J.L."/>
            <person name="Fuhrmann J.L."/>
            <person name="Geoghagen N.S.M."/>
            <person name="Gnehm C.L."/>
            <person name="McDonald L.A."/>
            <person name="Small K.V."/>
            <person name="Fraser C.M."/>
            <person name="Smith H.O."/>
            <person name="Venter J.C."/>
        </authorList>
    </citation>
    <scope>NUCLEOTIDE SEQUENCE [LARGE SCALE GENOMIC DNA]</scope>
    <source>
        <strain>ATCC 51907 / DSM 11121 / KW20 / Rd</strain>
    </source>
</reference>
<reference key="2">
    <citation type="journal article" date="2000" name="Electrophoresis">
        <title>Two-dimensional map of the proteome of Haemophilus influenzae.</title>
        <authorList>
            <person name="Langen H."/>
            <person name="Takacs B."/>
            <person name="Evers S."/>
            <person name="Berndt P."/>
            <person name="Lahm H.W."/>
            <person name="Wipf B."/>
            <person name="Gray C."/>
            <person name="Fountoulakis M."/>
        </authorList>
    </citation>
    <scope>IDENTIFICATION BY MASS SPECTROMETRY</scope>
    <source>
        <strain>ATCC 51907 / DSM 11121 / KW20 / Rd</strain>
    </source>
</reference>
<accession>P45173</accession>
<gene>
    <name type="ordered locus">HI_1349</name>
</gene>
<sequence>MSKTSIGLDKVQSAELADKLNELLATYQVFYTNVRGYHWNIKGVNFFALHAKFEEIYTNLVARVDEVAERILTLGYTPNNAYSQYLKISRIKEDIAVSEAQECLSGTLQGLKTLLDQQREILAFANNANDEGTASQMSDYIKEQEKLVWMFQAACQTCHN</sequence>
<comment type="similarity">
    <text evidence="1">Belongs to the Dps family.</text>
</comment>
<protein>
    <recommendedName>
        <fullName>Uncharacterized protein HI_1349</fullName>
    </recommendedName>
</protein>
<keyword id="KW-1185">Reference proteome</keyword>
<organism>
    <name type="scientific">Haemophilus influenzae (strain ATCC 51907 / DSM 11121 / KW20 / Rd)</name>
    <dbReference type="NCBI Taxonomy" id="71421"/>
    <lineage>
        <taxon>Bacteria</taxon>
        <taxon>Pseudomonadati</taxon>
        <taxon>Pseudomonadota</taxon>
        <taxon>Gammaproteobacteria</taxon>
        <taxon>Pasteurellales</taxon>
        <taxon>Pasteurellaceae</taxon>
        <taxon>Haemophilus</taxon>
    </lineage>
</organism>
<evidence type="ECO:0000305" key="1"/>
<feature type="chain" id="PRO_0000201669" description="Uncharacterized protein HI_1349">
    <location>
        <begin position="1"/>
        <end position="160"/>
    </location>
</feature>